<reference key="1">
    <citation type="journal article" date="2000" name="Nature">
        <title>The genome sequence of the food-borne pathogen Campylobacter jejuni reveals hypervariable sequences.</title>
        <authorList>
            <person name="Parkhill J."/>
            <person name="Wren B.W."/>
            <person name="Mungall K.L."/>
            <person name="Ketley J.M."/>
            <person name="Churcher C.M."/>
            <person name="Basham D."/>
            <person name="Chillingworth T."/>
            <person name="Davies R.M."/>
            <person name="Feltwell T."/>
            <person name="Holroyd S."/>
            <person name="Jagels K."/>
            <person name="Karlyshev A.V."/>
            <person name="Moule S."/>
            <person name="Pallen M.J."/>
            <person name="Penn C.W."/>
            <person name="Quail M.A."/>
            <person name="Rajandream M.A."/>
            <person name="Rutherford K.M."/>
            <person name="van Vliet A.H.M."/>
            <person name="Whitehead S."/>
            <person name="Barrell B.G."/>
        </authorList>
    </citation>
    <scope>NUCLEOTIDE SEQUENCE [LARGE SCALE GENOMIC DNA]</scope>
    <source>
        <strain>ATCC 700819 / NCTC 11168</strain>
    </source>
</reference>
<dbReference type="EC" id="2.2.1.2"/>
<dbReference type="EMBL" id="AL111168">
    <property type="protein sequence ID" value="CAL34434.1"/>
    <property type="molecule type" value="Genomic_DNA"/>
</dbReference>
<dbReference type="PIR" id="G81446">
    <property type="entry name" value="G81446"/>
</dbReference>
<dbReference type="RefSeq" id="WP_002851728.1">
    <property type="nucleotide sequence ID" value="NZ_SZUC01000004.1"/>
</dbReference>
<dbReference type="RefSeq" id="YP_002343722.1">
    <property type="nucleotide sequence ID" value="NC_002163.1"/>
</dbReference>
<dbReference type="SMR" id="Q9PIL5"/>
<dbReference type="IntAct" id="Q9PIL5">
    <property type="interactions" value="9"/>
</dbReference>
<dbReference type="STRING" id="192222.Cj0281c"/>
<dbReference type="PaxDb" id="192222-Cj0281c"/>
<dbReference type="EnsemblBacteria" id="CAL34434">
    <property type="protein sequence ID" value="CAL34434"/>
    <property type="gene ID" value="Cj0281c"/>
</dbReference>
<dbReference type="GeneID" id="904605"/>
<dbReference type="KEGG" id="cje:Cj0281c"/>
<dbReference type="PATRIC" id="fig|192222.6.peg.274"/>
<dbReference type="eggNOG" id="COG0176">
    <property type="taxonomic scope" value="Bacteria"/>
</dbReference>
<dbReference type="HOGENOM" id="CLU_050771_1_0_7"/>
<dbReference type="OrthoDB" id="9809101at2"/>
<dbReference type="UniPathway" id="UPA00115">
    <property type="reaction ID" value="UER00414"/>
</dbReference>
<dbReference type="Proteomes" id="UP000000799">
    <property type="component" value="Chromosome"/>
</dbReference>
<dbReference type="GO" id="GO:0005737">
    <property type="term" value="C:cytoplasm"/>
    <property type="evidence" value="ECO:0007669"/>
    <property type="project" value="UniProtKB-SubCell"/>
</dbReference>
<dbReference type="GO" id="GO:0004801">
    <property type="term" value="F:transaldolase activity"/>
    <property type="evidence" value="ECO:0007669"/>
    <property type="project" value="UniProtKB-UniRule"/>
</dbReference>
<dbReference type="GO" id="GO:0005975">
    <property type="term" value="P:carbohydrate metabolic process"/>
    <property type="evidence" value="ECO:0007669"/>
    <property type="project" value="InterPro"/>
</dbReference>
<dbReference type="GO" id="GO:0006098">
    <property type="term" value="P:pentose-phosphate shunt"/>
    <property type="evidence" value="ECO:0007669"/>
    <property type="project" value="UniProtKB-UniRule"/>
</dbReference>
<dbReference type="CDD" id="cd00955">
    <property type="entry name" value="Transaldolase_like"/>
    <property type="match status" value="1"/>
</dbReference>
<dbReference type="Gene3D" id="3.20.20.70">
    <property type="entry name" value="Aldolase class I"/>
    <property type="match status" value="1"/>
</dbReference>
<dbReference type="HAMAP" id="MF_00493">
    <property type="entry name" value="Transaldolase_2"/>
    <property type="match status" value="1"/>
</dbReference>
<dbReference type="InterPro" id="IPR013785">
    <property type="entry name" value="Aldolase_TIM"/>
</dbReference>
<dbReference type="InterPro" id="IPR001585">
    <property type="entry name" value="TAL/FSA"/>
</dbReference>
<dbReference type="InterPro" id="IPR004732">
    <property type="entry name" value="Transaldolase_2"/>
</dbReference>
<dbReference type="InterPro" id="IPR018225">
    <property type="entry name" value="Transaldolase_AS"/>
</dbReference>
<dbReference type="NCBIfam" id="NF003026">
    <property type="entry name" value="PRK03903.1"/>
    <property type="match status" value="1"/>
</dbReference>
<dbReference type="NCBIfam" id="TIGR00876">
    <property type="entry name" value="tal_mycobact"/>
    <property type="match status" value="1"/>
</dbReference>
<dbReference type="PANTHER" id="PTHR10683">
    <property type="entry name" value="TRANSALDOLASE"/>
    <property type="match status" value="1"/>
</dbReference>
<dbReference type="PANTHER" id="PTHR10683:SF31">
    <property type="entry name" value="TRANSALDOLASE"/>
    <property type="match status" value="1"/>
</dbReference>
<dbReference type="Pfam" id="PF00923">
    <property type="entry name" value="TAL_FSA"/>
    <property type="match status" value="1"/>
</dbReference>
<dbReference type="PIRSF" id="PIRSF036915">
    <property type="entry name" value="Trnald_Bac_Plnt"/>
    <property type="match status" value="1"/>
</dbReference>
<dbReference type="SUPFAM" id="SSF51569">
    <property type="entry name" value="Aldolase"/>
    <property type="match status" value="1"/>
</dbReference>
<dbReference type="PROSITE" id="PS01054">
    <property type="entry name" value="TRANSALDOLASE_1"/>
    <property type="match status" value="1"/>
</dbReference>
<comment type="function">
    <text evidence="1">Transaldolase is important for the balance of metabolites in the pentose-phosphate pathway.</text>
</comment>
<comment type="catalytic activity">
    <reaction>
        <text>D-sedoheptulose 7-phosphate + D-glyceraldehyde 3-phosphate = D-erythrose 4-phosphate + beta-D-fructose 6-phosphate</text>
        <dbReference type="Rhea" id="RHEA:17053"/>
        <dbReference type="ChEBI" id="CHEBI:16897"/>
        <dbReference type="ChEBI" id="CHEBI:57483"/>
        <dbReference type="ChEBI" id="CHEBI:57634"/>
        <dbReference type="ChEBI" id="CHEBI:59776"/>
        <dbReference type="EC" id="2.2.1.2"/>
    </reaction>
</comment>
<comment type="pathway">
    <text>Carbohydrate degradation; pentose phosphate pathway; D-glyceraldehyde 3-phosphate and beta-D-fructose 6-phosphate from D-ribose 5-phosphate and D-xylulose 5-phosphate (non-oxidative stage): step 2/3.</text>
</comment>
<comment type="subcellular location">
    <subcellularLocation>
        <location evidence="1">Cytoplasm</location>
    </subcellularLocation>
</comment>
<comment type="similarity">
    <text evidence="2">Belongs to the transaldolase family. Type 2 subfamily.</text>
</comment>
<sequence>MKNFSLWCDFIENSFLDNEFLNLLSHGINGATSNPAIFKNAILNSPIYKDKILKLKEKKTKDIYEELAISDIQKAADKLAPLFYQKNDGFISIEIDPRLHDNTTLSLGEAKRLYSAIGKENIMIKIPATKASYEVMYELMKNGISVNATLIFSLEQSQKCFEALNAGLVEFRKNNIALKEQNTRTPQAVISIFVSRFDRLLNPKAKEQNRIGILNANLAYNNIYSKNEPNIRALFASTGVKGDDLPKDYYIKELLFENSVNTAPLDAIEAFKGKMHFKKPLMNFEIYTELNQIISQSEREKACNDLLSDGLEQFCIAFEDILKAL</sequence>
<accession>Q9PIL5</accession>
<accession>Q0PBM5</accession>
<feature type="chain" id="PRO_0000173630" description="Transaldolase">
    <location>
        <begin position="1"/>
        <end position="325"/>
    </location>
</feature>
<feature type="active site" description="Schiff-base intermediate with substrate" evidence="1">
    <location>
        <position position="125"/>
    </location>
</feature>
<name>TAL_CAMJE</name>
<proteinExistence type="inferred from homology"/>
<evidence type="ECO:0000250" key="1"/>
<evidence type="ECO:0000305" key="2"/>
<keyword id="KW-0963">Cytoplasm</keyword>
<keyword id="KW-0570">Pentose shunt</keyword>
<keyword id="KW-1185">Reference proteome</keyword>
<keyword id="KW-0704">Schiff base</keyword>
<keyword id="KW-0808">Transferase</keyword>
<gene>
    <name type="primary">tal</name>
    <name type="ordered locus">Cj0281c</name>
</gene>
<protein>
    <recommendedName>
        <fullName>Transaldolase</fullName>
        <ecNumber>2.2.1.2</ecNumber>
    </recommendedName>
</protein>
<organism>
    <name type="scientific">Campylobacter jejuni subsp. jejuni serotype O:2 (strain ATCC 700819 / NCTC 11168)</name>
    <dbReference type="NCBI Taxonomy" id="192222"/>
    <lineage>
        <taxon>Bacteria</taxon>
        <taxon>Pseudomonadati</taxon>
        <taxon>Campylobacterota</taxon>
        <taxon>Epsilonproteobacteria</taxon>
        <taxon>Campylobacterales</taxon>
        <taxon>Campylobacteraceae</taxon>
        <taxon>Campylobacter</taxon>
    </lineage>
</organism>